<organism>
    <name type="scientific">Desulfitobacterium hafniense (strain DSM 10664 / DCB-2)</name>
    <dbReference type="NCBI Taxonomy" id="272564"/>
    <lineage>
        <taxon>Bacteria</taxon>
        <taxon>Bacillati</taxon>
        <taxon>Bacillota</taxon>
        <taxon>Clostridia</taxon>
        <taxon>Eubacteriales</taxon>
        <taxon>Desulfitobacteriaceae</taxon>
        <taxon>Desulfitobacterium</taxon>
    </lineage>
</organism>
<accession>B8FRL1</accession>
<dbReference type="EMBL" id="CP001336">
    <property type="protein sequence ID" value="ACL21771.1"/>
    <property type="molecule type" value="Genomic_DNA"/>
</dbReference>
<dbReference type="RefSeq" id="WP_005813207.1">
    <property type="nucleotide sequence ID" value="NC_011830.1"/>
</dbReference>
<dbReference type="SMR" id="B8FRL1"/>
<dbReference type="KEGG" id="dhd:Dhaf_3755"/>
<dbReference type="HOGENOM" id="CLU_103507_2_1_9"/>
<dbReference type="Proteomes" id="UP000007726">
    <property type="component" value="Chromosome"/>
</dbReference>
<dbReference type="GO" id="GO:0022625">
    <property type="term" value="C:cytosolic large ribosomal subunit"/>
    <property type="evidence" value="ECO:0007669"/>
    <property type="project" value="TreeGrafter"/>
</dbReference>
<dbReference type="GO" id="GO:0003735">
    <property type="term" value="F:structural constituent of ribosome"/>
    <property type="evidence" value="ECO:0007669"/>
    <property type="project" value="InterPro"/>
</dbReference>
<dbReference type="GO" id="GO:0006412">
    <property type="term" value="P:translation"/>
    <property type="evidence" value="ECO:0007669"/>
    <property type="project" value="UniProtKB-UniRule"/>
</dbReference>
<dbReference type="FunFam" id="2.30.30.790:FF:000001">
    <property type="entry name" value="50S ribosomal protein L19"/>
    <property type="match status" value="1"/>
</dbReference>
<dbReference type="Gene3D" id="2.30.30.790">
    <property type="match status" value="1"/>
</dbReference>
<dbReference type="HAMAP" id="MF_00402">
    <property type="entry name" value="Ribosomal_bL19"/>
    <property type="match status" value="1"/>
</dbReference>
<dbReference type="InterPro" id="IPR001857">
    <property type="entry name" value="Ribosomal_bL19"/>
</dbReference>
<dbReference type="InterPro" id="IPR018257">
    <property type="entry name" value="Ribosomal_bL19_CS"/>
</dbReference>
<dbReference type="InterPro" id="IPR038657">
    <property type="entry name" value="Ribosomal_bL19_sf"/>
</dbReference>
<dbReference type="InterPro" id="IPR008991">
    <property type="entry name" value="Translation_prot_SH3-like_sf"/>
</dbReference>
<dbReference type="NCBIfam" id="TIGR01024">
    <property type="entry name" value="rplS_bact"/>
    <property type="match status" value="1"/>
</dbReference>
<dbReference type="PANTHER" id="PTHR15680:SF9">
    <property type="entry name" value="LARGE RIBOSOMAL SUBUNIT PROTEIN BL19M"/>
    <property type="match status" value="1"/>
</dbReference>
<dbReference type="PANTHER" id="PTHR15680">
    <property type="entry name" value="RIBOSOMAL PROTEIN L19"/>
    <property type="match status" value="1"/>
</dbReference>
<dbReference type="Pfam" id="PF01245">
    <property type="entry name" value="Ribosomal_L19"/>
    <property type="match status" value="1"/>
</dbReference>
<dbReference type="PIRSF" id="PIRSF002191">
    <property type="entry name" value="Ribosomal_L19"/>
    <property type="match status" value="1"/>
</dbReference>
<dbReference type="PRINTS" id="PR00061">
    <property type="entry name" value="RIBOSOMALL19"/>
</dbReference>
<dbReference type="SUPFAM" id="SSF50104">
    <property type="entry name" value="Translation proteins SH3-like domain"/>
    <property type="match status" value="1"/>
</dbReference>
<dbReference type="PROSITE" id="PS01015">
    <property type="entry name" value="RIBOSOMAL_L19"/>
    <property type="match status" value="1"/>
</dbReference>
<feature type="chain" id="PRO_1000134569" description="Large ribosomal subunit protein bL19">
    <location>
        <begin position="1"/>
        <end position="113"/>
    </location>
</feature>
<proteinExistence type="inferred from homology"/>
<evidence type="ECO:0000255" key="1">
    <source>
        <dbReference type="HAMAP-Rule" id="MF_00402"/>
    </source>
</evidence>
<evidence type="ECO:0000305" key="2"/>
<gene>
    <name evidence="1" type="primary">rplS</name>
    <name type="ordered locus">Dhaf_3755</name>
</gene>
<name>RL19_DESHD</name>
<protein>
    <recommendedName>
        <fullName evidence="1">Large ribosomal subunit protein bL19</fullName>
    </recommendedName>
    <alternativeName>
        <fullName evidence="2">50S ribosomal protein L19</fullName>
    </alternativeName>
</protein>
<reference key="1">
    <citation type="journal article" date="2012" name="BMC Microbiol.">
        <title>Genome sequence of Desulfitobacterium hafniense DCB-2, a Gram-positive anaerobe capable of dehalogenation and metal reduction.</title>
        <authorList>
            <person name="Kim S.H."/>
            <person name="Harzman C."/>
            <person name="Davis J.K."/>
            <person name="Hutcheson R."/>
            <person name="Broderick J.B."/>
            <person name="Marsh T.L."/>
            <person name="Tiedje J.M."/>
        </authorList>
    </citation>
    <scope>NUCLEOTIDE SEQUENCE [LARGE SCALE GENOMIC DNA]</scope>
    <source>
        <strain>DSM 10664 / DCB-2</strain>
    </source>
</reference>
<comment type="function">
    <text evidence="1">This protein is located at the 30S-50S ribosomal subunit interface and may play a role in the structure and function of the aminoacyl-tRNA binding site.</text>
</comment>
<comment type="similarity">
    <text evidence="1">Belongs to the bacterial ribosomal protein bL19 family.</text>
</comment>
<sequence>MDFIRMIEEEQMKKDLPAFRPGDTVRVHVKVVEGTRERIQAFEGVVIKMKGGGLRRTFTVRRVTYGVGVERTFPLHSPRIDRIEVIRRGIVRRAKLYYLRELSGKAARIRDRR</sequence>
<keyword id="KW-0687">Ribonucleoprotein</keyword>
<keyword id="KW-0689">Ribosomal protein</keyword>